<comment type="function">
    <text evidence="1">Redox regulated molecular chaperone. Protects both thermally unfolding and oxidatively damaged proteins from irreversible aggregation. Plays an important role in the bacterial defense system toward oxidative stress.</text>
</comment>
<comment type="subcellular location">
    <subcellularLocation>
        <location evidence="1">Cytoplasm</location>
    </subcellularLocation>
</comment>
<comment type="PTM">
    <text evidence="1">Under oxidizing conditions two disulfide bonds are formed involving the reactive cysteines. Under reducing conditions zinc is bound to the reactive cysteines and the protein is inactive.</text>
</comment>
<comment type="similarity">
    <text evidence="1">Belongs to the HSP33 family.</text>
</comment>
<name>HSLO_PSEAB</name>
<dbReference type="EMBL" id="CP000438">
    <property type="protein sequence ID" value="ABJ14577.1"/>
    <property type="molecule type" value="Genomic_DNA"/>
</dbReference>
<dbReference type="RefSeq" id="WP_003109983.1">
    <property type="nucleotide sequence ID" value="NZ_CP034244.1"/>
</dbReference>
<dbReference type="SMR" id="Q02EH1"/>
<dbReference type="KEGG" id="pau:PA14_68610"/>
<dbReference type="PseudoCAP" id="PA14_68610"/>
<dbReference type="HOGENOM" id="CLU_054493_0_0_6"/>
<dbReference type="BioCyc" id="PAER208963:G1G74-5782-MONOMER"/>
<dbReference type="Proteomes" id="UP000000653">
    <property type="component" value="Chromosome"/>
</dbReference>
<dbReference type="GO" id="GO:0005737">
    <property type="term" value="C:cytoplasm"/>
    <property type="evidence" value="ECO:0007669"/>
    <property type="project" value="UniProtKB-SubCell"/>
</dbReference>
<dbReference type="GO" id="GO:0044183">
    <property type="term" value="F:protein folding chaperone"/>
    <property type="evidence" value="ECO:0007669"/>
    <property type="project" value="TreeGrafter"/>
</dbReference>
<dbReference type="GO" id="GO:0051082">
    <property type="term" value="F:unfolded protein binding"/>
    <property type="evidence" value="ECO:0007669"/>
    <property type="project" value="UniProtKB-UniRule"/>
</dbReference>
<dbReference type="GO" id="GO:0042026">
    <property type="term" value="P:protein refolding"/>
    <property type="evidence" value="ECO:0007669"/>
    <property type="project" value="TreeGrafter"/>
</dbReference>
<dbReference type="CDD" id="cd00498">
    <property type="entry name" value="Hsp33"/>
    <property type="match status" value="1"/>
</dbReference>
<dbReference type="Gene3D" id="1.10.287.480">
    <property type="entry name" value="helix hairpin bin"/>
    <property type="match status" value="1"/>
</dbReference>
<dbReference type="Gene3D" id="3.55.30.10">
    <property type="entry name" value="Hsp33 domain"/>
    <property type="match status" value="1"/>
</dbReference>
<dbReference type="Gene3D" id="3.90.1280.10">
    <property type="entry name" value="HSP33 redox switch-like"/>
    <property type="match status" value="1"/>
</dbReference>
<dbReference type="HAMAP" id="MF_00117">
    <property type="entry name" value="HslO"/>
    <property type="match status" value="1"/>
</dbReference>
<dbReference type="InterPro" id="IPR000397">
    <property type="entry name" value="Heat_shock_Hsp33"/>
</dbReference>
<dbReference type="InterPro" id="IPR016154">
    <property type="entry name" value="Heat_shock_Hsp33_C"/>
</dbReference>
<dbReference type="InterPro" id="IPR016153">
    <property type="entry name" value="Heat_shock_Hsp33_N"/>
</dbReference>
<dbReference type="InterPro" id="IPR023212">
    <property type="entry name" value="Hsp33_helix_hairpin_bin_dom_sf"/>
</dbReference>
<dbReference type="NCBIfam" id="NF001033">
    <property type="entry name" value="PRK00114.1"/>
    <property type="match status" value="1"/>
</dbReference>
<dbReference type="PANTHER" id="PTHR30111">
    <property type="entry name" value="33 KDA CHAPERONIN"/>
    <property type="match status" value="1"/>
</dbReference>
<dbReference type="PANTHER" id="PTHR30111:SF1">
    <property type="entry name" value="33 KDA CHAPERONIN"/>
    <property type="match status" value="1"/>
</dbReference>
<dbReference type="Pfam" id="PF01430">
    <property type="entry name" value="HSP33"/>
    <property type="match status" value="1"/>
</dbReference>
<dbReference type="PIRSF" id="PIRSF005261">
    <property type="entry name" value="Heat_shock_Hsp33"/>
    <property type="match status" value="1"/>
</dbReference>
<dbReference type="SUPFAM" id="SSF64397">
    <property type="entry name" value="Hsp33 domain"/>
    <property type="match status" value="1"/>
</dbReference>
<dbReference type="SUPFAM" id="SSF118352">
    <property type="entry name" value="HSP33 redox switch-like"/>
    <property type="match status" value="1"/>
</dbReference>
<keyword id="KW-0143">Chaperone</keyword>
<keyword id="KW-0963">Cytoplasm</keyword>
<keyword id="KW-1015">Disulfide bond</keyword>
<keyword id="KW-0676">Redox-active center</keyword>
<keyword id="KW-0862">Zinc</keyword>
<gene>
    <name evidence="1" type="primary">hslO</name>
    <name type="ordered locus">PA14_68610</name>
</gene>
<organism>
    <name type="scientific">Pseudomonas aeruginosa (strain UCBPP-PA14)</name>
    <dbReference type="NCBI Taxonomy" id="208963"/>
    <lineage>
        <taxon>Bacteria</taxon>
        <taxon>Pseudomonadati</taxon>
        <taxon>Pseudomonadota</taxon>
        <taxon>Gammaproteobacteria</taxon>
        <taxon>Pseudomonadales</taxon>
        <taxon>Pseudomonadaceae</taxon>
        <taxon>Pseudomonas</taxon>
    </lineage>
</organism>
<reference key="1">
    <citation type="journal article" date="2006" name="Genome Biol.">
        <title>Genomic analysis reveals that Pseudomonas aeruginosa virulence is combinatorial.</title>
        <authorList>
            <person name="Lee D.G."/>
            <person name="Urbach J.M."/>
            <person name="Wu G."/>
            <person name="Liberati N.T."/>
            <person name="Feinbaum R.L."/>
            <person name="Miyata S."/>
            <person name="Diggins L.T."/>
            <person name="He J."/>
            <person name="Saucier M."/>
            <person name="Deziel E."/>
            <person name="Friedman L."/>
            <person name="Li L."/>
            <person name="Grills G."/>
            <person name="Montgomery K."/>
            <person name="Kucherlapati R."/>
            <person name="Rahme L.G."/>
            <person name="Ausubel F.M."/>
        </authorList>
    </citation>
    <scope>NUCLEOTIDE SEQUENCE [LARGE SCALE GENOMIC DNA]</scope>
    <source>
        <strain>UCBPP-PA14</strain>
    </source>
</reference>
<protein>
    <recommendedName>
        <fullName evidence="1">33 kDa chaperonin</fullName>
    </recommendedName>
    <alternativeName>
        <fullName evidence="1">Heat shock protein 33 homolog</fullName>
        <shortName evidence="1">HSP33</shortName>
    </alternativeName>
</protein>
<feature type="chain" id="PRO_1000015560" description="33 kDa chaperonin">
    <location>
        <begin position="1"/>
        <end position="297"/>
    </location>
</feature>
<feature type="disulfide bond" description="Redox-active" evidence="1">
    <location>
        <begin position="232"/>
        <end position="234"/>
    </location>
</feature>
<feature type="disulfide bond" description="Redox-active" evidence="1">
    <location>
        <begin position="266"/>
        <end position="269"/>
    </location>
</feature>
<evidence type="ECO:0000255" key="1">
    <source>
        <dbReference type="HAMAP-Rule" id="MF_00117"/>
    </source>
</evidence>
<accession>Q02EH1</accession>
<proteinExistence type="inferred from homology"/>
<sequence length="297" mass="32848">MSHSDQSQRFLFDDTDVRGEMVDLERSYSEVLAKHPYPEPVAQLLGEMLAAASLLCGTLKFDGLLVLQARSSGAVPLLMVECSSDRQVRGLARYSAESIGADAGMQELMPEGVLTLTVDPVKGQRYQGIVALEGVNLAECLSNYFASSEQLPTRFWLNANGRRARGLLLQQLPADRLKDPEAREASWQHLTTLADTLTAEELLALDNETVLHRLYHEETVRLFEPQPLVFHCSCSRERSANALVSLGQADCERLLEEEEGSITIDCQFCNQRYLFDASDVAQLFAGAGSQGPSETRH</sequence>